<accession>P80869</accession>
<evidence type="ECO:0000250" key="1"/>
<evidence type="ECO:0000255" key="2">
    <source>
        <dbReference type="PROSITE-ProRule" id="PRU10001"/>
    </source>
</evidence>
<evidence type="ECO:0000305" key="3"/>
<comment type="catalytic activity">
    <reaction>
        <text>D-glucose + NAD(+) = D-glucono-1,5-lactone + NADH + H(+)</text>
        <dbReference type="Rhea" id="RHEA:14293"/>
        <dbReference type="ChEBI" id="CHEBI:4167"/>
        <dbReference type="ChEBI" id="CHEBI:15378"/>
        <dbReference type="ChEBI" id="CHEBI:16217"/>
        <dbReference type="ChEBI" id="CHEBI:57540"/>
        <dbReference type="ChEBI" id="CHEBI:57945"/>
        <dbReference type="EC" id="1.1.1.47"/>
    </reaction>
</comment>
<comment type="catalytic activity">
    <reaction>
        <text>D-glucose + NADP(+) = D-glucono-1,5-lactone + NADPH + H(+)</text>
        <dbReference type="Rhea" id="RHEA:14405"/>
        <dbReference type="ChEBI" id="CHEBI:4167"/>
        <dbReference type="ChEBI" id="CHEBI:15378"/>
        <dbReference type="ChEBI" id="CHEBI:16217"/>
        <dbReference type="ChEBI" id="CHEBI:57783"/>
        <dbReference type="ChEBI" id="CHEBI:58349"/>
        <dbReference type="EC" id="1.1.1.47"/>
    </reaction>
</comment>
<comment type="subunit">
    <text evidence="1">Homotetramer.</text>
</comment>
<comment type="induction">
    <text>By heat shock, salt stress, oxidative stress, glucose limitation and oxygen limitation.</text>
</comment>
<comment type="similarity">
    <text evidence="3">Belongs to the short-chain dehydrogenases/reductases (SDR) family.</text>
</comment>
<dbReference type="EC" id="1.1.1.47"/>
<dbReference type="EMBL" id="AB000617">
    <property type="protein sequence ID" value="BAA22244.1"/>
    <property type="molecule type" value="Genomic_DNA"/>
</dbReference>
<dbReference type="EMBL" id="AL009126">
    <property type="protein sequence ID" value="CAB12077.1"/>
    <property type="molecule type" value="Genomic_DNA"/>
</dbReference>
<dbReference type="PIR" id="G69755">
    <property type="entry name" value="G69755"/>
</dbReference>
<dbReference type="RefSeq" id="NP_388165.1">
    <property type="nucleotide sequence ID" value="NC_000964.3"/>
</dbReference>
<dbReference type="RefSeq" id="WP_003246415.1">
    <property type="nucleotide sequence ID" value="NZ_OZ025638.1"/>
</dbReference>
<dbReference type="SMR" id="P80869"/>
<dbReference type="FunCoup" id="P80869">
    <property type="interactions" value="206"/>
</dbReference>
<dbReference type="STRING" id="224308.BSU02830"/>
<dbReference type="PaxDb" id="224308-BSU02830"/>
<dbReference type="EnsemblBacteria" id="CAB12077">
    <property type="protein sequence ID" value="CAB12077"/>
    <property type="gene ID" value="BSU_02830"/>
</dbReference>
<dbReference type="GeneID" id="938377"/>
<dbReference type="KEGG" id="bsu:BSU02830"/>
<dbReference type="PATRIC" id="fig|224308.179.peg.294"/>
<dbReference type="eggNOG" id="COG1028">
    <property type="taxonomic scope" value="Bacteria"/>
</dbReference>
<dbReference type="InParanoid" id="P80869"/>
<dbReference type="OrthoDB" id="9803333at2"/>
<dbReference type="PhylomeDB" id="P80869"/>
<dbReference type="BioCyc" id="BSUB:BSU02830-MONOMER"/>
<dbReference type="Proteomes" id="UP000001570">
    <property type="component" value="Chromosome"/>
</dbReference>
<dbReference type="GO" id="GO:0047934">
    <property type="term" value="F:glucose 1-dehydrogenase (NAD+) activity"/>
    <property type="evidence" value="ECO:0007669"/>
    <property type="project" value="RHEA"/>
</dbReference>
<dbReference type="GO" id="GO:0047935">
    <property type="term" value="F:glucose 1-dehydrogenase (NADP+) activity"/>
    <property type="evidence" value="ECO:0007669"/>
    <property type="project" value="RHEA"/>
</dbReference>
<dbReference type="GO" id="GO:0016616">
    <property type="term" value="F:oxidoreductase activity, acting on the CH-OH group of donors, NAD or NADP as acceptor"/>
    <property type="evidence" value="ECO:0000318"/>
    <property type="project" value="GO_Central"/>
</dbReference>
<dbReference type="GO" id="GO:0006629">
    <property type="term" value="P:lipid metabolic process"/>
    <property type="evidence" value="ECO:0007669"/>
    <property type="project" value="UniProtKB-ARBA"/>
</dbReference>
<dbReference type="GO" id="GO:0032787">
    <property type="term" value="P:monocarboxylic acid metabolic process"/>
    <property type="evidence" value="ECO:0007669"/>
    <property type="project" value="UniProtKB-ARBA"/>
</dbReference>
<dbReference type="CDD" id="cd05358">
    <property type="entry name" value="GlcDH_SDR_c"/>
    <property type="match status" value="1"/>
</dbReference>
<dbReference type="FunFam" id="3.40.50.720:FF:000248">
    <property type="entry name" value="Glucose 1-dehydrogenase"/>
    <property type="match status" value="1"/>
</dbReference>
<dbReference type="Gene3D" id="3.40.50.720">
    <property type="entry name" value="NAD(P)-binding Rossmann-like Domain"/>
    <property type="match status" value="1"/>
</dbReference>
<dbReference type="InterPro" id="IPR036291">
    <property type="entry name" value="NAD(P)-bd_dom_sf"/>
</dbReference>
<dbReference type="InterPro" id="IPR020904">
    <property type="entry name" value="Sc_DH/Rdtase_CS"/>
</dbReference>
<dbReference type="InterPro" id="IPR050259">
    <property type="entry name" value="SDR"/>
</dbReference>
<dbReference type="InterPro" id="IPR002347">
    <property type="entry name" value="SDR_fam"/>
</dbReference>
<dbReference type="NCBIfam" id="NF005559">
    <property type="entry name" value="PRK07231.1"/>
    <property type="match status" value="1"/>
</dbReference>
<dbReference type="NCBIfam" id="NF009466">
    <property type="entry name" value="PRK12826.1-2"/>
    <property type="match status" value="1"/>
</dbReference>
<dbReference type="PANTHER" id="PTHR42879">
    <property type="entry name" value="3-OXOACYL-(ACYL-CARRIER-PROTEIN) REDUCTASE"/>
    <property type="match status" value="1"/>
</dbReference>
<dbReference type="PANTHER" id="PTHR42879:SF2">
    <property type="entry name" value="3-OXOACYL-[ACYL-CARRIER-PROTEIN] REDUCTASE FABG"/>
    <property type="match status" value="1"/>
</dbReference>
<dbReference type="Pfam" id="PF13561">
    <property type="entry name" value="adh_short_C2"/>
    <property type="match status" value="1"/>
</dbReference>
<dbReference type="PRINTS" id="PR00081">
    <property type="entry name" value="GDHRDH"/>
</dbReference>
<dbReference type="PRINTS" id="PR00080">
    <property type="entry name" value="SDRFAMILY"/>
</dbReference>
<dbReference type="SUPFAM" id="SSF51735">
    <property type="entry name" value="NAD(P)-binding Rossmann-fold domains"/>
    <property type="match status" value="1"/>
</dbReference>
<dbReference type="PROSITE" id="PS00061">
    <property type="entry name" value="ADH_SHORT"/>
    <property type="match status" value="1"/>
</dbReference>
<name>DHG2_BACSU</name>
<protein>
    <recommendedName>
        <fullName>Glucose 1-dehydrogenase 2</fullName>
        <ecNumber>1.1.1.47</ecNumber>
    </recommendedName>
    <alternativeName>
        <fullName>GLCDH-II</fullName>
        <shortName>GDH-II</shortName>
    </alternativeName>
    <alternativeName>
        <fullName>General stress protein 74</fullName>
        <shortName>GSP74</shortName>
    </alternativeName>
</protein>
<keyword id="KW-0903">Direct protein sequencing</keyword>
<keyword id="KW-0521">NADP</keyword>
<keyword id="KW-0560">Oxidoreductase</keyword>
<keyword id="KW-1185">Reference proteome</keyword>
<keyword id="KW-0346">Stress response</keyword>
<reference key="1">
    <citation type="journal article" date="1997" name="Microbiology">
        <title>A 32 kb nucleotide sequence from the region of the lincomycin-resistance gene (22 degrees-25 degrees) of the Bacillus subtilis chromosome and identification of the site of the lin-2 mutation.</title>
        <authorList>
            <person name="Kumano M."/>
            <person name="Tamakoshi A."/>
            <person name="Yamane K."/>
        </authorList>
    </citation>
    <scope>NUCLEOTIDE SEQUENCE [GENOMIC DNA]</scope>
    <source>
        <strain>168</strain>
    </source>
</reference>
<reference key="2">
    <citation type="journal article" date="1997" name="Nature">
        <title>The complete genome sequence of the Gram-positive bacterium Bacillus subtilis.</title>
        <authorList>
            <person name="Kunst F."/>
            <person name="Ogasawara N."/>
            <person name="Moszer I."/>
            <person name="Albertini A.M."/>
            <person name="Alloni G."/>
            <person name="Azevedo V."/>
            <person name="Bertero M.G."/>
            <person name="Bessieres P."/>
            <person name="Bolotin A."/>
            <person name="Borchert S."/>
            <person name="Borriss R."/>
            <person name="Boursier L."/>
            <person name="Brans A."/>
            <person name="Braun M."/>
            <person name="Brignell S.C."/>
            <person name="Bron S."/>
            <person name="Brouillet S."/>
            <person name="Bruschi C.V."/>
            <person name="Caldwell B."/>
            <person name="Capuano V."/>
            <person name="Carter N.M."/>
            <person name="Choi S.-K."/>
            <person name="Codani J.-J."/>
            <person name="Connerton I.F."/>
            <person name="Cummings N.J."/>
            <person name="Daniel R.A."/>
            <person name="Denizot F."/>
            <person name="Devine K.M."/>
            <person name="Duesterhoeft A."/>
            <person name="Ehrlich S.D."/>
            <person name="Emmerson P.T."/>
            <person name="Entian K.-D."/>
            <person name="Errington J."/>
            <person name="Fabret C."/>
            <person name="Ferrari E."/>
            <person name="Foulger D."/>
            <person name="Fritz C."/>
            <person name="Fujita M."/>
            <person name="Fujita Y."/>
            <person name="Fuma S."/>
            <person name="Galizzi A."/>
            <person name="Galleron N."/>
            <person name="Ghim S.-Y."/>
            <person name="Glaser P."/>
            <person name="Goffeau A."/>
            <person name="Golightly E.J."/>
            <person name="Grandi G."/>
            <person name="Guiseppi G."/>
            <person name="Guy B.J."/>
            <person name="Haga K."/>
            <person name="Haiech J."/>
            <person name="Harwood C.R."/>
            <person name="Henaut A."/>
            <person name="Hilbert H."/>
            <person name="Holsappel S."/>
            <person name="Hosono S."/>
            <person name="Hullo M.-F."/>
            <person name="Itaya M."/>
            <person name="Jones L.-M."/>
            <person name="Joris B."/>
            <person name="Karamata D."/>
            <person name="Kasahara Y."/>
            <person name="Klaerr-Blanchard M."/>
            <person name="Klein C."/>
            <person name="Kobayashi Y."/>
            <person name="Koetter P."/>
            <person name="Koningstein G."/>
            <person name="Krogh S."/>
            <person name="Kumano M."/>
            <person name="Kurita K."/>
            <person name="Lapidus A."/>
            <person name="Lardinois S."/>
            <person name="Lauber J."/>
            <person name="Lazarevic V."/>
            <person name="Lee S.-M."/>
            <person name="Levine A."/>
            <person name="Liu H."/>
            <person name="Masuda S."/>
            <person name="Mauel C."/>
            <person name="Medigue C."/>
            <person name="Medina N."/>
            <person name="Mellado R.P."/>
            <person name="Mizuno M."/>
            <person name="Moestl D."/>
            <person name="Nakai S."/>
            <person name="Noback M."/>
            <person name="Noone D."/>
            <person name="O'Reilly M."/>
            <person name="Ogawa K."/>
            <person name="Ogiwara A."/>
            <person name="Oudega B."/>
            <person name="Park S.-H."/>
            <person name="Parro V."/>
            <person name="Pohl T.M."/>
            <person name="Portetelle D."/>
            <person name="Porwollik S."/>
            <person name="Prescott A.M."/>
            <person name="Presecan E."/>
            <person name="Pujic P."/>
            <person name="Purnelle B."/>
            <person name="Rapoport G."/>
            <person name="Rey M."/>
            <person name="Reynolds S."/>
            <person name="Rieger M."/>
            <person name="Rivolta C."/>
            <person name="Rocha E."/>
            <person name="Roche B."/>
            <person name="Rose M."/>
            <person name="Sadaie Y."/>
            <person name="Sato T."/>
            <person name="Scanlan E."/>
            <person name="Schleich S."/>
            <person name="Schroeter R."/>
            <person name="Scoffone F."/>
            <person name="Sekiguchi J."/>
            <person name="Sekowska A."/>
            <person name="Seror S.J."/>
            <person name="Serror P."/>
            <person name="Shin B.-S."/>
            <person name="Soldo B."/>
            <person name="Sorokin A."/>
            <person name="Tacconi E."/>
            <person name="Takagi T."/>
            <person name="Takahashi H."/>
            <person name="Takemaru K."/>
            <person name="Takeuchi M."/>
            <person name="Tamakoshi A."/>
            <person name="Tanaka T."/>
            <person name="Terpstra P."/>
            <person name="Tognoni A."/>
            <person name="Tosato V."/>
            <person name="Uchiyama S."/>
            <person name="Vandenbol M."/>
            <person name="Vannier F."/>
            <person name="Vassarotti A."/>
            <person name="Viari A."/>
            <person name="Wambutt R."/>
            <person name="Wedler E."/>
            <person name="Wedler H."/>
            <person name="Weitzenegger T."/>
            <person name="Winters P."/>
            <person name="Wipat A."/>
            <person name="Yamamoto H."/>
            <person name="Yamane K."/>
            <person name="Yasumoto K."/>
            <person name="Yata K."/>
            <person name="Yoshida K."/>
            <person name="Yoshikawa H.-F."/>
            <person name="Zumstein E."/>
            <person name="Yoshikawa H."/>
            <person name="Danchin A."/>
        </authorList>
    </citation>
    <scope>NUCLEOTIDE SEQUENCE [LARGE SCALE GENOMIC DNA]</scope>
    <source>
        <strain>168</strain>
    </source>
</reference>
<reference key="3">
    <citation type="journal article" date="1997" name="Electrophoresis">
        <title>First steps from a two-dimensional protein index towards a response-regulation map for Bacillus subtilis.</title>
        <authorList>
            <person name="Antelmann H."/>
            <person name="Bernhardt J."/>
            <person name="Schmid R."/>
            <person name="Mach H."/>
            <person name="Voelker U."/>
            <person name="Hecker M."/>
        </authorList>
    </citation>
    <scope>PROTEIN SEQUENCE OF 1-13</scope>
    <source>
        <strain>168 / IS58</strain>
    </source>
</reference>
<sequence>MYKDLTGKTAIVTGSSKGIGKAIAERFGKEKMNVVVNYHSDPSGADETLEIIKQNGGKAVSVEADVSKEEGIQALLDTALEHFGTLDVMVNNSGFNGVEAMPHEMSLEDWQRVIDVNVTGTFLGAKAALNHMMKNNIKGNVLNISSVHQQIPRPVNVQYSTSKGGIKMMTETLALNYADKGIRVNAIAPGTIATESNVDTKKEESRQKQLKKIPMKAFGKPEEVAAAAAWLVSEEASYVTGATLFVDGGMTLYPSQLE</sequence>
<feature type="chain" id="PRO_0000054617" description="Glucose 1-dehydrogenase 2">
    <location>
        <begin position="1"/>
        <end position="258"/>
    </location>
</feature>
<feature type="active site" description="Proton acceptor" evidence="2">
    <location>
        <position position="159"/>
    </location>
</feature>
<feature type="binding site" evidence="1">
    <location>
        <begin position="11"/>
        <end position="35"/>
    </location>
    <ligand>
        <name>NADP(+)</name>
        <dbReference type="ChEBI" id="CHEBI:58349"/>
    </ligand>
</feature>
<feature type="binding site" evidence="1">
    <location>
        <position position="146"/>
    </location>
    <ligand>
        <name>substrate</name>
    </ligand>
</feature>
<organism>
    <name type="scientific">Bacillus subtilis (strain 168)</name>
    <dbReference type="NCBI Taxonomy" id="224308"/>
    <lineage>
        <taxon>Bacteria</taxon>
        <taxon>Bacillati</taxon>
        <taxon>Bacillota</taxon>
        <taxon>Bacilli</taxon>
        <taxon>Bacillales</taxon>
        <taxon>Bacillaceae</taxon>
        <taxon>Bacillus</taxon>
    </lineage>
</organism>
<proteinExistence type="evidence at protein level"/>
<gene>
    <name type="primary">ycdF</name>
    <name type="ordered locus">BSU02830</name>
</gene>